<sequence>MTMNVLEAGKWKSIVPAPGEGLLAVLHMMVFTDALHRERSVKWQAGVCYNGGKDFAVSLARPKAAEGIAD</sequence>
<organism>
    <name type="scientific">Homo sapiens</name>
    <name type="common">Human</name>
    <dbReference type="NCBI Taxonomy" id="9606"/>
    <lineage>
        <taxon>Eukaryota</taxon>
        <taxon>Metazoa</taxon>
        <taxon>Chordata</taxon>
        <taxon>Craniata</taxon>
        <taxon>Vertebrata</taxon>
        <taxon>Euteleostomi</taxon>
        <taxon>Mammalia</taxon>
        <taxon>Eutheria</taxon>
        <taxon>Euarchontoglires</taxon>
        <taxon>Primates</taxon>
        <taxon>Haplorrhini</taxon>
        <taxon>Catarrhini</taxon>
        <taxon>Hominidae</taxon>
        <taxon>Homo</taxon>
    </lineage>
</organism>
<evidence type="ECO:0000269" key="1">
    <source>
    </source>
</evidence>
<evidence type="ECO:0000305" key="2"/>
<evidence type="ECO:0000312" key="3">
    <source>
        <dbReference type="HGNC" id="HGNC:23658"/>
    </source>
</evidence>
<accession>Q9P2X7</accession>
<keyword id="KW-1185">Reference proteome</keyword>
<keyword id="KW-0043">Tumor suppressor</keyword>
<reference key="1">
    <citation type="journal article" date="2000" name="Genes Chromosomes Cancer">
        <title>Isolation and mutational analysis of a novel human cDNA, DEC1 (deleted in esophageal cancer 1), derived from the tumor-suppressor locus on chromosome 9q32.</title>
        <authorList>
            <person name="Nishiwaki T."/>
            <person name="Daigo Y."/>
            <person name="Kawasoe T."/>
            <person name="Nakamura Y."/>
        </authorList>
    </citation>
    <scope>NUCLEOTIDE SEQUENCE [MRNA]</scope>
    <scope>FUNCTION</scope>
    <scope>TISSUE SPECIFICITY</scope>
</reference>
<reference key="2">
    <citation type="journal article" date="2004" name="Nature">
        <title>DNA sequence and analysis of human chromosome 9.</title>
        <authorList>
            <person name="Humphray S.J."/>
            <person name="Oliver K."/>
            <person name="Hunt A.R."/>
            <person name="Plumb R.W."/>
            <person name="Loveland J.E."/>
            <person name="Howe K.L."/>
            <person name="Andrews T.D."/>
            <person name="Searle S."/>
            <person name="Hunt S.E."/>
            <person name="Scott C.E."/>
            <person name="Jones M.C."/>
            <person name="Ainscough R."/>
            <person name="Almeida J.P."/>
            <person name="Ambrose K.D."/>
            <person name="Ashwell R.I.S."/>
            <person name="Babbage A.K."/>
            <person name="Babbage S."/>
            <person name="Bagguley C.L."/>
            <person name="Bailey J."/>
            <person name="Banerjee R."/>
            <person name="Barker D.J."/>
            <person name="Barlow K.F."/>
            <person name="Bates K."/>
            <person name="Beasley H."/>
            <person name="Beasley O."/>
            <person name="Bird C.P."/>
            <person name="Bray-Allen S."/>
            <person name="Brown A.J."/>
            <person name="Brown J.Y."/>
            <person name="Burford D."/>
            <person name="Burrill W."/>
            <person name="Burton J."/>
            <person name="Carder C."/>
            <person name="Carter N.P."/>
            <person name="Chapman J.C."/>
            <person name="Chen Y."/>
            <person name="Clarke G."/>
            <person name="Clark S.Y."/>
            <person name="Clee C.M."/>
            <person name="Clegg S."/>
            <person name="Collier R.E."/>
            <person name="Corby N."/>
            <person name="Crosier M."/>
            <person name="Cummings A.T."/>
            <person name="Davies J."/>
            <person name="Dhami P."/>
            <person name="Dunn M."/>
            <person name="Dutta I."/>
            <person name="Dyer L.W."/>
            <person name="Earthrowl M.E."/>
            <person name="Faulkner L."/>
            <person name="Fleming C.J."/>
            <person name="Frankish A."/>
            <person name="Frankland J.A."/>
            <person name="French L."/>
            <person name="Fricker D.G."/>
            <person name="Garner P."/>
            <person name="Garnett J."/>
            <person name="Ghori J."/>
            <person name="Gilbert J.G.R."/>
            <person name="Glison C."/>
            <person name="Grafham D.V."/>
            <person name="Gribble S."/>
            <person name="Griffiths C."/>
            <person name="Griffiths-Jones S."/>
            <person name="Grocock R."/>
            <person name="Guy J."/>
            <person name="Hall R.E."/>
            <person name="Hammond S."/>
            <person name="Harley J.L."/>
            <person name="Harrison E.S.I."/>
            <person name="Hart E.A."/>
            <person name="Heath P.D."/>
            <person name="Henderson C.D."/>
            <person name="Hopkins B.L."/>
            <person name="Howard P.J."/>
            <person name="Howden P.J."/>
            <person name="Huckle E."/>
            <person name="Johnson C."/>
            <person name="Johnson D."/>
            <person name="Joy A.A."/>
            <person name="Kay M."/>
            <person name="Keenan S."/>
            <person name="Kershaw J.K."/>
            <person name="Kimberley A.M."/>
            <person name="King A."/>
            <person name="Knights A."/>
            <person name="Laird G.K."/>
            <person name="Langford C."/>
            <person name="Lawlor S."/>
            <person name="Leongamornlert D.A."/>
            <person name="Leversha M."/>
            <person name="Lloyd C."/>
            <person name="Lloyd D.M."/>
            <person name="Lovell J."/>
            <person name="Martin S."/>
            <person name="Mashreghi-Mohammadi M."/>
            <person name="Matthews L."/>
            <person name="McLaren S."/>
            <person name="McLay K.E."/>
            <person name="McMurray A."/>
            <person name="Milne S."/>
            <person name="Nickerson T."/>
            <person name="Nisbett J."/>
            <person name="Nordsiek G."/>
            <person name="Pearce A.V."/>
            <person name="Peck A.I."/>
            <person name="Porter K.M."/>
            <person name="Pandian R."/>
            <person name="Pelan S."/>
            <person name="Phillimore B."/>
            <person name="Povey S."/>
            <person name="Ramsey Y."/>
            <person name="Rand V."/>
            <person name="Scharfe M."/>
            <person name="Sehra H.K."/>
            <person name="Shownkeen R."/>
            <person name="Sims S.K."/>
            <person name="Skuce C.D."/>
            <person name="Smith M."/>
            <person name="Steward C.A."/>
            <person name="Swarbreck D."/>
            <person name="Sycamore N."/>
            <person name="Tester J."/>
            <person name="Thorpe A."/>
            <person name="Tracey A."/>
            <person name="Tromans A."/>
            <person name="Thomas D.W."/>
            <person name="Wall M."/>
            <person name="Wallis J.M."/>
            <person name="West A.P."/>
            <person name="Whitehead S.L."/>
            <person name="Willey D.L."/>
            <person name="Williams S.A."/>
            <person name="Wilming L."/>
            <person name="Wray P.W."/>
            <person name="Young L."/>
            <person name="Ashurst J.L."/>
            <person name="Coulson A."/>
            <person name="Blocker H."/>
            <person name="Durbin R.M."/>
            <person name="Sulston J.E."/>
            <person name="Hubbard T."/>
            <person name="Jackson M.J."/>
            <person name="Bentley D.R."/>
            <person name="Beck S."/>
            <person name="Rogers J."/>
            <person name="Dunham I."/>
        </authorList>
    </citation>
    <scope>NUCLEOTIDE SEQUENCE [LARGE SCALE GENOMIC DNA]</scope>
</reference>
<comment type="function">
    <text evidence="1">Candidate tumor suppressor.</text>
</comment>
<comment type="tissue specificity">
    <text evidence="1">Expressed in many tissues, with highest expression in prostate and testis. Reduced expression in esophageal carcinomas.</text>
</comment>
<protein>
    <recommendedName>
        <fullName evidence="2">Deleted in esophageal cancer 1</fullName>
    </recommendedName>
    <alternativeName>
        <fullName>Candidate tumor suppressor CTS9</fullName>
    </alternativeName>
</protein>
<feature type="chain" id="PRO_0000240631" description="Deleted in esophageal cancer 1">
    <location>
        <begin position="1"/>
        <end position="70"/>
    </location>
</feature>
<feature type="sequence variant" id="VAR_050948" description="In dbSNP:rs2269700.">
    <original>A</original>
    <variation>V</variation>
    <location>
        <position position="60"/>
    </location>
</feature>
<gene>
    <name evidence="3" type="primary">DELEC1</name>
    <name type="synonym">CTS9</name>
    <name type="synonym">DEC1</name>
</gene>
<name>DEC1_HUMAN</name>
<proteinExistence type="evidence at transcript level"/>
<dbReference type="EMBL" id="AB022761">
    <property type="protein sequence ID" value="BAA96242.1"/>
    <property type="molecule type" value="mRNA"/>
</dbReference>
<dbReference type="EMBL" id="AL714001">
    <property type="status" value="NOT_ANNOTATED_CDS"/>
    <property type="molecule type" value="Genomic_DNA"/>
</dbReference>
<dbReference type="RefSeq" id="NP_059114.1">
    <property type="nucleotide sequence ID" value="NM_017418.2"/>
</dbReference>
<dbReference type="BioGRID" id="119083">
    <property type="interactions" value="36"/>
</dbReference>
<dbReference type="FunCoup" id="Q9P2X7">
    <property type="interactions" value="3"/>
</dbReference>
<dbReference type="IntAct" id="Q9P2X7">
    <property type="interactions" value="2"/>
</dbReference>
<dbReference type="BioMuta" id="DEC1"/>
<dbReference type="PaxDb" id="9606-ENSP00000363128"/>
<dbReference type="DNASU" id="50514"/>
<dbReference type="UCSC" id="uc004bjk.1">
    <property type="organism name" value="human"/>
</dbReference>
<dbReference type="AGR" id="HGNC:23658"/>
<dbReference type="GeneCards" id="DELEC1"/>
<dbReference type="HGNC" id="HGNC:23658">
    <property type="gene designation" value="DELEC1"/>
</dbReference>
<dbReference type="MIM" id="604767">
    <property type="type" value="gene"/>
</dbReference>
<dbReference type="neXtProt" id="NX_Q9P2X7"/>
<dbReference type="eggNOG" id="ENOG502TM3R">
    <property type="taxonomic scope" value="Eukaryota"/>
</dbReference>
<dbReference type="HOGENOM" id="CLU_2757121_0_0_1"/>
<dbReference type="InParanoid" id="Q9P2X7"/>
<dbReference type="PAN-GO" id="Q9P2X7">
    <property type="GO annotations" value="0 GO annotations based on evolutionary models"/>
</dbReference>
<dbReference type="PhylomeDB" id="Q9P2X7"/>
<dbReference type="TreeFam" id="TF340655"/>
<dbReference type="PathwayCommons" id="Q9P2X7"/>
<dbReference type="SignaLink" id="Q9P2X7"/>
<dbReference type="BioGRID-ORCS" id="50514">
    <property type="hits" value="13 hits in 1077 CRISPR screens"/>
</dbReference>
<dbReference type="ChiTaRS" id="DEC1">
    <property type="organism name" value="human"/>
</dbReference>
<dbReference type="GeneWiki" id="DEC1"/>
<dbReference type="GenomeRNAi" id="50514"/>
<dbReference type="Pharos" id="Q9P2X7">
    <property type="development level" value="Tbio"/>
</dbReference>
<dbReference type="PRO" id="PR:Q9P2X7"/>
<dbReference type="Proteomes" id="UP000005640">
    <property type="component" value="Unplaced"/>
</dbReference>
<dbReference type="RNAct" id="Q9P2X7">
    <property type="molecule type" value="protein"/>
</dbReference>
<dbReference type="GO" id="GO:0008285">
    <property type="term" value="P:negative regulation of cell population proliferation"/>
    <property type="evidence" value="ECO:0000304"/>
    <property type="project" value="ProtInc"/>
</dbReference>
<dbReference type="InterPro" id="IPR031718">
    <property type="entry name" value="DEC1"/>
</dbReference>
<dbReference type="Pfam" id="PF15859">
    <property type="entry name" value="DEC1"/>
    <property type="match status" value="1"/>
</dbReference>